<gene>
    <name type="primary">yfjF</name>
    <name type="ordered locus">BSU08120</name>
</gene>
<proteinExistence type="inferred from homology"/>
<feature type="chain" id="PRO_0000162326" description="UPF0060 membrane protein YfjF">
    <location>
        <begin position="1"/>
        <end position="109"/>
    </location>
</feature>
<feature type="transmembrane region" description="Helical" evidence="2">
    <location>
        <begin position="6"/>
        <end position="26"/>
    </location>
</feature>
<feature type="transmembrane region" description="Helical" evidence="2">
    <location>
        <begin position="32"/>
        <end position="52"/>
    </location>
</feature>
<feature type="transmembrane region" description="Helical" evidence="2">
    <location>
        <begin position="61"/>
        <end position="81"/>
    </location>
</feature>
<feature type="transmembrane region" description="Helical" evidence="2">
    <location>
        <begin position="87"/>
        <end position="107"/>
    </location>
</feature>
<keyword id="KW-1003">Cell membrane</keyword>
<keyword id="KW-0472">Membrane</keyword>
<keyword id="KW-1185">Reference proteome</keyword>
<keyword id="KW-0812">Transmembrane</keyword>
<keyword id="KW-1133">Transmembrane helix</keyword>
<reference key="1">
    <citation type="journal article" date="1997" name="Nature">
        <title>The complete genome sequence of the Gram-positive bacterium Bacillus subtilis.</title>
        <authorList>
            <person name="Kunst F."/>
            <person name="Ogasawara N."/>
            <person name="Moszer I."/>
            <person name="Albertini A.M."/>
            <person name="Alloni G."/>
            <person name="Azevedo V."/>
            <person name="Bertero M.G."/>
            <person name="Bessieres P."/>
            <person name="Bolotin A."/>
            <person name="Borchert S."/>
            <person name="Borriss R."/>
            <person name="Boursier L."/>
            <person name="Brans A."/>
            <person name="Braun M."/>
            <person name="Brignell S.C."/>
            <person name="Bron S."/>
            <person name="Brouillet S."/>
            <person name="Bruschi C.V."/>
            <person name="Caldwell B."/>
            <person name="Capuano V."/>
            <person name="Carter N.M."/>
            <person name="Choi S.-K."/>
            <person name="Codani J.-J."/>
            <person name="Connerton I.F."/>
            <person name="Cummings N.J."/>
            <person name="Daniel R.A."/>
            <person name="Denizot F."/>
            <person name="Devine K.M."/>
            <person name="Duesterhoeft A."/>
            <person name="Ehrlich S.D."/>
            <person name="Emmerson P.T."/>
            <person name="Entian K.-D."/>
            <person name="Errington J."/>
            <person name="Fabret C."/>
            <person name="Ferrari E."/>
            <person name="Foulger D."/>
            <person name="Fritz C."/>
            <person name="Fujita M."/>
            <person name="Fujita Y."/>
            <person name="Fuma S."/>
            <person name="Galizzi A."/>
            <person name="Galleron N."/>
            <person name="Ghim S.-Y."/>
            <person name="Glaser P."/>
            <person name="Goffeau A."/>
            <person name="Golightly E.J."/>
            <person name="Grandi G."/>
            <person name="Guiseppi G."/>
            <person name="Guy B.J."/>
            <person name="Haga K."/>
            <person name="Haiech J."/>
            <person name="Harwood C.R."/>
            <person name="Henaut A."/>
            <person name="Hilbert H."/>
            <person name="Holsappel S."/>
            <person name="Hosono S."/>
            <person name="Hullo M.-F."/>
            <person name="Itaya M."/>
            <person name="Jones L.-M."/>
            <person name="Joris B."/>
            <person name="Karamata D."/>
            <person name="Kasahara Y."/>
            <person name="Klaerr-Blanchard M."/>
            <person name="Klein C."/>
            <person name="Kobayashi Y."/>
            <person name="Koetter P."/>
            <person name="Koningstein G."/>
            <person name="Krogh S."/>
            <person name="Kumano M."/>
            <person name="Kurita K."/>
            <person name="Lapidus A."/>
            <person name="Lardinois S."/>
            <person name="Lauber J."/>
            <person name="Lazarevic V."/>
            <person name="Lee S.-M."/>
            <person name="Levine A."/>
            <person name="Liu H."/>
            <person name="Masuda S."/>
            <person name="Mauel C."/>
            <person name="Medigue C."/>
            <person name="Medina N."/>
            <person name="Mellado R.P."/>
            <person name="Mizuno M."/>
            <person name="Moestl D."/>
            <person name="Nakai S."/>
            <person name="Noback M."/>
            <person name="Noone D."/>
            <person name="O'Reilly M."/>
            <person name="Ogawa K."/>
            <person name="Ogiwara A."/>
            <person name="Oudega B."/>
            <person name="Park S.-H."/>
            <person name="Parro V."/>
            <person name="Pohl T.M."/>
            <person name="Portetelle D."/>
            <person name="Porwollik S."/>
            <person name="Prescott A.M."/>
            <person name="Presecan E."/>
            <person name="Pujic P."/>
            <person name="Purnelle B."/>
            <person name="Rapoport G."/>
            <person name="Rey M."/>
            <person name="Reynolds S."/>
            <person name="Rieger M."/>
            <person name="Rivolta C."/>
            <person name="Rocha E."/>
            <person name="Roche B."/>
            <person name="Rose M."/>
            <person name="Sadaie Y."/>
            <person name="Sato T."/>
            <person name="Scanlan E."/>
            <person name="Schleich S."/>
            <person name="Schroeter R."/>
            <person name="Scoffone F."/>
            <person name="Sekiguchi J."/>
            <person name="Sekowska A."/>
            <person name="Seror S.J."/>
            <person name="Serror P."/>
            <person name="Shin B.-S."/>
            <person name="Soldo B."/>
            <person name="Sorokin A."/>
            <person name="Tacconi E."/>
            <person name="Takagi T."/>
            <person name="Takahashi H."/>
            <person name="Takemaru K."/>
            <person name="Takeuchi M."/>
            <person name="Tamakoshi A."/>
            <person name="Tanaka T."/>
            <person name="Terpstra P."/>
            <person name="Tognoni A."/>
            <person name="Tosato V."/>
            <person name="Uchiyama S."/>
            <person name="Vandenbol M."/>
            <person name="Vannier F."/>
            <person name="Vassarotti A."/>
            <person name="Viari A."/>
            <person name="Wambutt R."/>
            <person name="Wedler E."/>
            <person name="Wedler H."/>
            <person name="Weitzenegger T."/>
            <person name="Winters P."/>
            <person name="Wipat A."/>
            <person name="Yamamoto H."/>
            <person name="Yamane K."/>
            <person name="Yasumoto K."/>
            <person name="Yata K."/>
            <person name="Yoshida K."/>
            <person name="Yoshikawa H.-F."/>
            <person name="Zumstein E."/>
            <person name="Yoshikawa H."/>
            <person name="Danchin A."/>
        </authorList>
    </citation>
    <scope>NUCLEOTIDE SEQUENCE [LARGE SCALE GENOMIC DNA]</scope>
    <source>
        <strain>168</strain>
    </source>
</reference>
<sequence>MMLITILLFLAAGLAEIGGGYLVWLWLREAKPAGYGIAGALILIVYGILPTFQSFPSFGRVYAAYGGVFIVLAVLWGWLVDRKTPDLYDWIGAFICLIGVCVILFAPRG</sequence>
<organism>
    <name type="scientific">Bacillus subtilis (strain 168)</name>
    <dbReference type="NCBI Taxonomy" id="224308"/>
    <lineage>
        <taxon>Bacteria</taxon>
        <taxon>Bacillati</taxon>
        <taxon>Bacillota</taxon>
        <taxon>Bacilli</taxon>
        <taxon>Bacillales</taxon>
        <taxon>Bacillaceae</taxon>
        <taxon>Bacillus</taxon>
    </lineage>
</organism>
<dbReference type="EMBL" id="AL009126">
    <property type="protein sequence ID" value="CAB12641.1"/>
    <property type="molecule type" value="Genomic_DNA"/>
</dbReference>
<dbReference type="PIR" id="B69806">
    <property type="entry name" value="B69806"/>
</dbReference>
<dbReference type="RefSeq" id="NP_388693.1">
    <property type="nucleotide sequence ID" value="NC_000964.3"/>
</dbReference>
<dbReference type="RefSeq" id="WP_010886445.1">
    <property type="nucleotide sequence ID" value="NZ_OZ025638.1"/>
</dbReference>
<dbReference type="FunCoup" id="O31553">
    <property type="interactions" value="36"/>
</dbReference>
<dbReference type="STRING" id="224308.BSU08120"/>
<dbReference type="PaxDb" id="224308-BSU08120"/>
<dbReference type="DNASU" id="939201"/>
<dbReference type="EnsemblBacteria" id="CAB12641">
    <property type="protein sequence ID" value="CAB12641"/>
    <property type="gene ID" value="BSU_08120"/>
</dbReference>
<dbReference type="GeneID" id="939201"/>
<dbReference type="KEGG" id="bsu:BSU08120"/>
<dbReference type="PATRIC" id="fig|224308.43.peg.851"/>
<dbReference type="eggNOG" id="COG1742">
    <property type="taxonomic scope" value="Bacteria"/>
</dbReference>
<dbReference type="InParanoid" id="O31553"/>
<dbReference type="OrthoDB" id="123240at2"/>
<dbReference type="PhylomeDB" id="O31553"/>
<dbReference type="BioCyc" id="BSUB:BSU08120-MONOMER"/>
<dbReference type="Proteomes" id="UP000001570">
    <property type="component" value="Chromosome"/>
</dbReference>
<dbReference type="GO" id="GO:0005886">
    <property type="term" value="C:plasma membrane"/>
    <property type="evidence" value="ECO:0000318"/>
    <property type="project" value="GO_Central"/>
</dbReference>
<dbReference type="HAMAP" id="MF_00010">
    <property type="entry name" value="UPF0060"/>
    <property type="match status" value="1"/>
</dbReference>
<dbReference type="InterPro" id="IPR003844">
    <property type="entry name" value="UPF0060"/>
</dbReference>
<dbReference type="NCBIfam" id="NF002586">
    <property type="entry name" value="PRK02237.1"/>
    <property type="match status" value="1"/>
</dbReference>
<dbReference type="PANTHER" id="PTHR36116">
    <property type="entry name" value="UPF0060 MEMBRANE PROTEIN YNFA"/>
    <property type="match status" value="1"/>
</dbReference>
<dbReference type="PANTHER" id="PTHR36116:SF1">
    <property type="entry name" value="UPF0060 MEMBRANE PROTEIN YNFA"/>
    <property type="match status" value="1"/>
</dbReference>
<dbReference type="Pfam" id="PF02694">
    <property type="entry name" value="UPF0060"/>
    <property type="match status" value="1"/>
</dbReference>
<dbReference type="SUPFAM" id="SSF103481">
    <property type="entry name" value="Multidrug resistance efflux transporter EmrE"/>
    <property type="match status" value="1"/>
</dbReference>
<comment type="subcellular location">
    <subcellularLocation>
        <location evidence="1">Cell membrane</location>
        <topology evidence="1">Multi-pass membrane protein</topology>
    </subcellularLocation>
</comment>
<comment type="similarity">
    <text evidence="3">Belongs to the UPF0060 family.</text>
</comment>
<accession>O31553</accession>
<evidence type="ECO:0000250" key="1"/>
<evidence type="ECO:0000255" key="2"/>
<evidence type="ECO:0000305" key="3"/>
<name>YFJF_BACSU</name>
<protein>
    <recommendedName>
        <fullName>UPF0060 membrane protein YfjF</fullName>
    </recommendedName>
</protein>